<proteinExistence type="evidence at transcript level"/>
<sequence>MSSSLPILPKSLKDIPRSHNTQNILMPGQLPNDSMPLHQSATQSSISHPRASVVRSSYSAMLGYAANPIDSVSSHEGHFMAAPFISQSSNAEMLQYLCNNNTHGGHTVPTFFPAPACGAPDYMDTITVPDNHTQSGSSTVTSDAAKQNEWWADIMNDDWKDILDATATDSQSKSMAQPSNSAASQPAFNQSTSSHSGDICPVTSPPPNNSNASASKQRMRWTPELHESFVHAVNKLGGSEKATPKGVLKLMKVDGLTIYHVKSHLQKYRTARYKPDLSEGKTQEGKTTDELSLDLKASMDLTEALRLQMEVQKRLHEQLEIQRKLQLRIEEQGKYLQKMFEKQCKSSTQSVQDPSSGDTATPSEPSNSVDKDSEAALDPNRIGDNHPKNSTNVGANLKTAATESPDSPVIATDGSELPQEKRRRVHES</sequence>
<dbReference type="EMBL" id="DP000009">
    <property type="protein sequence ID" value="ABF95748.1"/>
    <property type="molecule type" value="Genomic_DNA"/>
</dbReference>
<dbReference type="EMBL" id="AP008209">
    <property type="protein sequence ID" value="BAF11920.1"/>
    <property type="molecule type" value="Genomic_DNA"/>
</dbReference>
<dbReference type="EMBL" id="AP014959">
    <property type="protein sequence ID" value="BAS84022.1"/>
    <property type="molecule type" value="Genomic_DNA"/>
</dbReference>
<dbReference type="EMBL" id="CM000140">
    <property type="protein sequence ID" value="EEE58994.1"/>
    <property type="molecule type" value="Genomic_DNA"/>
</dbReference>
<dbReference type="EMBL" id="AK063486">
    <property type="protein sequence ID" value="BAG88728.1"/>
    <property type="molecule type" value="mRNA"/>
</dbReference>
<dbReference type="EMBL" id="AK109510">
    <property type="protein sequence ID" value="BAG98784.1"/>
    <property type="molecule type" value="mRNA"/>
</dbReference>
<dbReference type="RefSeq" id="XP_015632603.1">
    <property type="nucleotide sequence ID" value="XM_015777117.1"/>
</dbReference>
<dbReference type="SMR" id="Q10LZ1"/>
<dbReference type="FunCoup" id="Q10LZ1">
    <property type="interactions" value="11"/>
</dbReference>
<dbReference type="STRING" id="39947.Q10LZ1"/>
<dbReference type="PaxDb" id="39947-Q10LZ1"/>
<dbReference type="EnsemblPlants" id="Os03t0329900-01">
    <property type="protein sequence ID" value="Os03t0329900-01"/>
    <property type="gene ID" value="Os03g0329900"/>
</dbReference>
<dbReference type="Gramene" id="Os03t0329900-01">
    <property type="protein sequence ID" value="Os03t0329900-01"/>
    <property type="gene ID" value="Os03g0329900"/>
</dbReference>
<dbReference type="KEGG" id="dosa:Os03g0329900"/>
<dbReference type="eggNOG" id="ENOG502QXMH">
    <property type="taxonomic scope" value="Eukaryota"/>
</dbReference>
<dbReference type="HOGENOM" id="CLU_044541_0_0_1"/>
<dbReference type="InParanoid" id="Q10LZ1"/>
<dbReference type="OMA" id="SDWPEWA"/>
<dbReference type="OrthoDB" id="551907at2759"/>
<dbReference type="Proteomes" id="UP000000763">
    <property type="component" value="Chromosome 3"/>
</dbReference>
<dbReference type="Proteomes" id="UP000007752">
    <property type="component" value="Chromosome 3"/>
</dbReference>
<dbReference type="Proteomes" id="UP000059680">
    <property type="component" value="Chromosome 3"/>
</dbReference>
<dbReference type="GO" id="GO:0005634">
    <property type="term" value="C:nucleus"/>
    <property type="evidence" value="ECO:0007669"/>
    <property type="project" value="UniProtKB-SubCell"/>
</dbReference>
<dbReference type="GO" id="GO:0003677">
    <property type="term" value="F:DNA binding"/>
    <property type="evidence" value="ECO:0007669"/>
    <property type="project" value="UniProtKB-KW"/>
</dbReference>
<dbReference type="GO" id="GO:0003700">
    <property type="term" value="F:DNA-binding transcription factor activity"/>
    <property type="evidence" value="ECO:0007669"/>
    <property type="project" value="InterPro"/>
</dbReference>
<dbReference type="FunFam" id="1.10.10.60:FF:000002">
    <property type="entry name" value="Myb family transcription factor"/>
    <property type="match status" value="1"/>
</dbReference>
<dbReference type="Gene3D" id="1.10.10.60">
    <property type="entry name" value="Homeodomain-like"/>
    <property type="match status" value="1"/>
</dbReference>
<dbReference type="InterPro" id="IPR009057">
    <property type="entry name" value="Homeodomain-like_sf"/>
</dbReference>
<dbReference type="InterPro" id="IPR025756">
    <property type="entry name" value="Myb_CC_LHEQLE"/>
</dbReference>
<dbReference type="InterPro" id="IPR017930">
    <property type="entry name" value="Myb_dom"/>
</dbReference>
<dbReference type="InterPro" id="IPR006447">
    <property type="entry name" value="Myb_dom_plants"/>
</dbReference>
<dbReference type="InterPro" id="IPR046955">
    <property type="entry name" value="PHR1-like"/>
</dbReference>
<dbReference type="InterPro" id="IPR001005">
    <property type="entry name" value="SANT/Myb"/>
</dbReference>
<dbReference type="NCBIfam" id="TIGR01557">
    <property type="entry name" value="myb_SHAQKYF"/>
    <property type="match status" value="1"/>
</dbReference>
<dbReference type="PANTHER" id="PTHR31499:SF80">
    <property type="entry name" value="HTH MYB-TYPE DOMAIN-CONTAINING PROTEIN"/>
    <property type="match status" value="1"/>
</dbReference>
<dbReference type="PANTHER" id="PTHR31499">
    <property type="entry name" value="MYB FAMILY TRANSCRIPTION FACTOR PHL11"/>
    <property type="match status" value="1"/>
</dbReference>
<dbReference type="Pfam" id="PF14379">
    <property type="entry name" value="Myb_CC_LHEQLE"/>
    <property type="match status" value="1"/>
</dbReference>
<dbReference type="Pfam" id="PF00249">
    <property type="entry name" value="Myb_DNA-binding"/>
    <property type="match status" value="1"/>
</dbReference>
<dbReference type="SUPFAM" id="SSF46689">
    <property type="entry name" value="Homeodomain-like"/>
    <property type="match status" value="1"/>
</dbReference>
<dbReference type="PROSITE" id="PS51294">
    <property type="entry name" value="HTH_MYB"/>
    <property type="match status" value="1"/>
</dbReference>
<protein>
    <recommendedName>
        <fullName evidence="5">Protein PHOSPHATE STARVATION RESPONSE 1</fullName>
        <shortName evidence="5">OsPHR1</shortName>
    </recommendedName>
</protein>
<reference key="1">
    <citation type="journal article" date="2008" name="Plant Physiol.">
        <title>OsPHR2 is involved in phosphate-starvation signaling and excessive phosphate accumulation in shoots of plants.</title>
        <authorList>
            <person name="Zhou J."/>
            <person name="Jiao F."/>
            <person name="Wu Z."/>
            <person name="Li Y."/>
            <person name="Wang X."/>
            <person name="He X."/>
            <person name="Zhong W."/>
            <person name="Wu P."/>
        </authorList>
    </citation>
    <scope>NUCLEOTIDE SEQUENCE [MRNA]</scope>
    <scope>TISSUE SPECIFICITY</scope>
    <scope>LACK OF INDUCTION BY PHOSPHATE</scope>
    <scope>SUBCELLULAR LOCATION</scope>
    <scope>FUNCTION</scope>
</reference>
<reference key="2">
    <citation type="journal article" date="2005" name="Genome Res.">
        <title>Sequence, annotation, and analysis of synteny between rice chromosome 3 and diverged grass species.</title>
        <authorList>
            <consortium name="The rice chromosome 3 sequencing consortium"/>
            <person name="Buell C.R."/>
            <person name="Yuan Q."/>
            <person name="Ouyang S."/>
            <person name="Liu J."/>
            <person name="Zhu W."/>
            <person name="Wang A."/>
            <person name="Maiti R."/>
            <person name="Haas B."/>
            <person name="Wortman J."/>
            <person name="Pertea M."/>
            <person name="Jones K.M."/>
            <person name="Kim M."/>
            <person name="Overton L."/>
            <person name="Tsitrin T."/>
            <person name="Fadrosh D."/>
            <person name="Bera J."/>
            <person name="Weaver B."/>
            <person name="Jin S."/>
            <person name="Johri S."/>
            <person name="Reardon M."/>
            <person name="Webb K."/>
            <person name="Hill J."/>
            <person name="Moffat K."/>
            <person name="Tallon L."/>
            <person name="Van Aken S."/>
            <person name="Lewis M."/>
            <person name="Utterback T."/>
            <person name="Feldblyum T."/>
            <person name="Zismann V."/>
            <person name="Iobst S."/>
            <person name="Hsiao J."/>
            <person name="de Vazeille A.R."/>
            <person name="Salzberg S.L."/>
            <person name="White O."/>
            <person name="Fraser C.M."/>
            <person name="Yu Y."/>
            <person name="Kim H."/>
            <person name="Rambo T."/>
            <person name="Currie J."/>
            <person name="Collura K."/>
            <person name="Kernodle-Thompson S."/>
            <person name="Wei F."/>
            <person name="Kudrna K."/>
            <person name="Ammiraju J.S.S."/>
            <person name="Luo M."/>
            <person name="Goicoechea J.L."/>
            <person name="Wing R.A."/>
            <person name="Henry D."/>
            <person name="Oates R."/>
            <person name="Palmer M."/>
            <person name="Pries G."/>
            <person name="Saski C."/>
            <person name="Simmons J."/>
            <person name="Soderlund C."/>
            <person name="Nelson W."/>
            <person name="de la Bastide M."/>
            <person name="Spiegel L."/>
            <person name="Nascimento L."/>
            <person name="Huang E."/>
            <person name="Preston R."/>
            <person name="Zutavern T."/>
            <person name="Palmer L."/>
            <person name="O'Shaughnessy A."/>
            <person name="Dike S."/>
            <person name="McCombie W.R."/>
            <person name="Minx P."/>
            <person name="Cordum H."/>
            <person name="Wilson R."/>
            <person name="Jin W."/>
            <person name="Lee H.R."/>
            <person name="Jiang J."/>
            <person name="Jackson S."/>
        </authorList>
    </citation>
    <scope>NUCLEOTIDE SEQUENCE [LARGE SCALE GENOMIC DNA]</scope>
    <source>
        <strain>cv. Nipponbare</strain>
    </source>
</reference>
<reference key="3">
    <citation type="journal article" date="2005" name="Nature">
        <title>The map-based sequence of the rice genome.</title>
        <authorList>
            <consortium name="International rice genome sequencing project (IRGSP)"/>
        </authorList>
    </citation>
    <scope>NUCLEOTIDE SEQUENCE [LARGE SCALE GENOMIC DNA]</scope>
    <source>
        <strain>cv. Nipponbare</strain>
    </source>
</reference>
<reference key="4">
    <citation type="journal article" date="2008" name="Nucleic Acids Res.">
        <title>The rice annotation project database (RAP-DB): 2008 update.</title>
        <authorList>
            <consortium name="The rice annotation project (RAP)"/>
        </authorList>
    </citation>
    <scope>GENOME REANNOTATION</scope>
    <source>
        <strain>cv. Nipponbare</strain>
    </source>
</reference>
<reference key="5">
    <citation type="journal article" date="2013" name="Rice">
        <title>Improvement of the Oryza sativa Nipponbare reference genome using next generation sequence and optical map data.</title>
        <authorList>
            <person name="Kawahara Y."/>
            <person name="de la Bastide M."/>
            <person name="Hamilton J.P."/>
            <person name="Kanamori H."/>
            <person name="McCombie W.R."/>
            <person name="Ouyang S."/>
            <person name="Schwartz D.C."/>
            <person name="Tanaka T."/>
            <person name="Wu J."/>
            <person name="Zhou S."/>
            <person name="Childs K.L."/>
            <person name="Davidson R.M."/>
            <person name="Lin H."/>
            <person name="Quesada-Ocampo L."/>
            <person name="Vaillancourt B."/>
            <person name="Sakai H."/>
            <person name="Lee S.S."/>
            <person name="Kim J."/>
            <person name="Numa H."/>
            <person name="Itoh T."/>
            <person name="Buell C.R."/>
            <person name="Matsumoto T."/>
        </authorList>
    </citation>
    <scope>GENOME REANNOTATION</scope>
    <source>
        <strain>cv. Nipponbare</strain>
    </source>
</reference>
<reference key="6">
    <citation type="journal article" date="2005" name="PLoS Biol.">
        <title>The genomes of Oryza sativa: a history of duplications.</title>
        <authorList>
            <person name="Yu J."/>
            <person name="Wang J."/>
            <person name="Lin W."/>
            <person name="Li S."/>
            <person name="Li H."/>
            <person name="Zhou J."/>
            <person name="Ni P."/>
            <person name="Dong W."/>
            <person name="Hu S."/>
            <person name="Zeng C."/>
            <person name="Zhang J."/>
            <person name="Zhang Y."/>
            <person name="Li R."/>
            <person name="Xu Z."/>
            <person name="Li S."/>
            <person name="Li X."/>
            <person name="Zheng H."/>
            <person name="Cong L."/>
            <person name="Lin L."/>
            <person name="Yin J."/>
            <person name="Geng J."/>
            <person name="Li G."/>
            <person name="Shi J."/>
            <person name="Liu J."/>
            <person name="Lv H."/>
            <person name="Li J."/>
            <person name="Wang J."/>
            <person name="Deng Y."/>
            <person name="Ran L."/>
            <person name="Shi X."/>
            <person name="Wang X."/>
            <person name="Wu Q."/>
            <person name="Li C."/>
            <person name="Ren X."/>
            <person name="Wang J."/>
            <person name="Wang X."/>
            <person name="Li D."/>
            <person name="Liu D."/>
            <person name="Zhang X."/>
            <person name="Ji Z."/>
            <person name="Zhao W."/>
            <person name="Sun Y."/>
            <person name="Zhang Z."/>
            <person name="Bao J."/>
            <person name="Han Y."/>
            <person name="Dong L."/>
            <person name="Ji J."/>
            <person name="Chen P."/>
            <person name="Wu S."/>
            <person name="Liu J."/>
            <person name="Xiao Y."/>
            <person name="Bu D."/>
            <person name="Tan J."/>
            <person name="Yang L."/>
            <person name="Ye C."/>
            <person name="Zhang J."/>
            <person name="Xu J."/>
            <person name="Zhou Y."/>
            <person name="Yu Y."/>
            <person name="Zhang B."/>
            <person name="Zhuang S."/>
            <person name="Wei H."/>
            <person name="Liu B."/>
            <person name="Lei M."/>
            <person name="Yu H."/>
            <person name="Li Y."/>
            <person name="Xu H."/>
            <person name="Wei S."/>
            <person name="He X."/>
            <person name="Fang L."/>
            <person name="Zhang Z."/>
            <person name="Zhang Y."/>
            <person name="Huang X."/>
            <person name="Su Z."/>
            <person name="Tong W."/>
            <person name="Li J."/>
            <person name="Tong Z."/>
            <person name="Li S."/>
            <person name="Ye J."/>
            <person name="Wang L."/>
            <person name="Fang L."/>
            <person name="Lei T."/>
            <person name="Chen C.-S."/>
            <person name="Chen H.-C."/>
            <person name="Xu Z."/>
            <person name="Li H."/>
            <person name="Huang H."/>
            <person name="Zhang F."/>
            <person name="Xu H."/>
            <person name="Li N."/>
            <person name="Zhao C."/>
            <person name="Li S."/>
            <person name="Dong L."/>
            <person name="Huang Y."/>
            <person name="Li L."/>
            <person name="Xi Y."/>
            <person name="Qi Q."/>
            <person name="Li W."/>
            <person name="Zhang B."/>
            <person name="Hu W."/>
            <person name="Zhang Y."/>
            <person name="Tian X."/>
            <person name="Jiao Y."/>
            <person name="Liang X."/>
            <person name="Jin J."/>
            <person name="Gao L."/>
            <person name="Zheng W."/>
            <person name="Hao B."/>
            <person name="Liu S.-M."/>
            <person name="Wang W."/>
            <person name="Yuan L."/>
            <person name="Cao M."/>
            <person name="McDermott J."/>
            <person name="Samudrala R."/>
            <person name="Wang J."/>
            <person name="Wong G.K.-S."/>
            <person name="Yang H."/>
        </authorList>
    </citation>
    <scope>NUCLEOTIDE SEQUENCE [LARGE SCALE GENOMIC DNA]</scope>
    <source>
        <strain>cv. Nipponbare</strain>
    </source>
</reference>
<reference key="7">
    <citation type="journal article" date="2003" name="Science">
        <title>Collection, mapping, and annotation of over 28,000 cDNA clones from japonica rice.</title>
        <authorList>
            <consortium name="The rice full-length cDNA consortium"/>
        </authorList>
    </citation>
    <scope>NUCLEOTIDE SEQUENCE [LARGE SCALE MRNA]</scope>
    <source>
        <strain>cv. Nipponbare</strain>
    </source>
</reference>
<reference key="8">
    <citation type="journal article" date="2015" name="Plant Physiol.">
        <title>Integrative Comparison of the Role of the PHOSPHATE RESPONSE1 Subfamily in Phosphate Signaling and Homeostasis in Rice.</title>
        <authorList>
            <person name="Guo M."/>
            <person name="Ruan W."/>
            <person name="Li C."/>
            <person name="Huang F."/>
            <person name="Zeng M."/>
            <person name="Liu Y."/>
            <person name="Yu Y."/>
            <person name="Ding X."/>
            <person name="Wu Y."/>
            <person name="Wu Z."/>
            <person name="Mao C."/>
            <person name="Yi K."/>
            <person name="Wu P."/>
            <person name="Mo X."/>
        </authorList>
    </citation>
    <scope>FUNCTION</scope>
    <scope>GENE FAMILY</scope>
    <scope>NOMENCLATURE</scope>
    <scope>DEVELOPMENTAL STAGE</scope>
    <scope>TISSUE SPECIFICITY</scope>
    <scope>LACK OF INDUCTION BY PHOSPHATE</scope>
</reference>
<gene>
    <name evidence="5" type="primary">PHR1</name>
    <name evidence="7" type="ordered locus">Os03g0329900</name>
    <name evidence="6" type="ordered locus">LOC_Os03g21240</name>
    <name evidence="8" type="ORF">OsJ_10705</name>
</gene>
<keyword id="KW-0238">DNA-binding</keyword>
<keyword id="KW-0539">Nucleus</keyword>
<keyword id="KW-1185">Reference proteome</keyword>
<keyword id="KW-0804">Transcription</keyword>
<keyword id="KW-0805">Transcription regulation</keyword>
<organism evidence="6">
    <name type="scientific">Oryza sativa subsp. japonica</name>
    <name type="common">Rice</name>
    <dbReference type="NCBI Taxonomy" id="39947"/>
    <lineage>
        <taxon>Eukaryota</taxon>
        <taxon>Viridiplantae</taxon>
        <taxon>Streptophyta</taxon>
        <taxon>Embryophyta</taxon>
        <taxon>Tracheophyta</taxon>
        <taxon>Spermatophyta</taxon>
        <taxon>Magnoliopsida</taxon>
        <taxon>Liliopsida</taxon>
        <taxon>Poales</taxon>
        <taxon>Poaceae</taxon>
        <taxon>BOP clade</taxon>
        <taxon>Oryzoideae</taxon>
        <taxon>Oryzeae</taxon>
        <taxon>Oryzinae</taxon>
        <taxon>Oryza</taxon>
        <taxon>Oryza sativa</taxon>
    </lineage>
</organism>
<accession>Q10LZ1</accession>
<feature type="chain" id="PRO_0000436714" description="Protein PHOSPHATE STARVATION RESPONSE 1">
    <location>
        <begin position="1"/>
        <end position="428"/>
    </location>
</feature>
<feature type="domain" description="HTH myb-type" evidence="1">
    <location>
        <begin position="213"/>
        <end position="273"/>
    </location>
</feature>
<feature type="DNA-binding region" description="H-T-H motif" evidence="1">
    <location>
        <begin position="244"/>
        <end position="269"/>
    </location>
</feature>
<feature type="region of interest" description="Disordered" evidence="2">
    <location>
        <begin position="1"/>
        <end position="32"/>
    </location>
</feature>
<feature type="region of interest" description="Disordered" evidence="2">
    <location>
        <begin position="168"/>
        <end position="219"/>
    </location>
</feature>
<feature type="region of interest" description="Disordered" evidence="2">
    <location>
        <begin position="345"/>
        <end position="428"/>
    </location>
</feature>
<feature type="compositionally biased region" description="Low complexity" evidence="2">
    <location>
        <begin position="1"/>
        <end position="10"/>
    </location>
</feature>
<feature type="compositionally biased region" description="Low complexity" evidence="2">
    <location>
        <begin position="176"/>
        <end position="191"/>
    </location>
</feature>
<feature type="compositionally biased region" description="Polar residues" evidence="2">
    <location>
        <begin position="345"/>
        <end position="368"/>
    </location>
</feature>
<feature type="compositionally biased region" description="Polar residues" evidence="2">
    <location>
        <begin position="388"/>
        <end position="405"/>
    </location>
</feature>
<name>PHR1_ORYSJ</name>
<comment type="function">
    <text evidence="3 4">Transcription factor involved in phosphate starvation signaling (PubMed:18263782, PubMed:26082401). Binds to P1BS, an imperfect palindromic sequence 5'-GNATATNC-3', to promote the expression of inorganic phosphate (Pi) starvation-responsive genes (PubMed:26082401). Functionally redundant with PHR2 and PHR3 in regulating Pi starvation response and Pi homeostasis (PubMed:26082401).</text>
</comment>
<comment type="subcellular location">
    <subcellularLocation>
        <location evidence="3">Nucleus</location>
    </subcellularLocation>
</comment>
<comment type="tissue specificity">
    <text evidence="3 4">Expressed in roots, stems, leaves and fruits (PubMed:18263782). Expressed in the root cap and the root vascular tissues, in the stele of lateral roots, in the mestome sheath cells and the phloem cells of the leaf, in pollen, vascular cylinder of the anther and the veins of the lemma, palea and pistils, and in the xylem and phloem regions of large vascular bundles in node I (PubMed:26082401).</text>
</comment>
<comment type="developmental stage">
    <text evidence="4">Expressed throughout all stages of plant growth.</text>
</comment>
<comment type="induction">
    <text evidence="3 4">Not regulated by Pi starvation.</text>
</comment>
<evidence type="ECO:0000255" key="1">
    <source>
        <dbReference type="PROSITE-ProRule" id="PRU00625"/>
    </source>
</evidence>
<evidence type="ECO:0000256" key="2">
    <source>
        <dbReference type="SAM" id="MobiDB-lite"/>
    </source>
</evidence>
<evidence type="ECO:0000269" key="3">
    <source>
    </source>
</evidence>
<evidence type="ECO:0000269" key="4">
    <source>
    </source>
</evidence>
<evidence type="ECO:0000303" key="5">
    <source>
    </source>
</evidence>
<evidence type="ECO:0000312" key="6">
    <source>
        <dbReference type="EMBL" id="ABF95748.1"/>
    </source>
</evidence>
<evidence type="ECO:0000312" key="7">
    <source>
        <dbReference type="EMBL" id="BAF11920.1"/>
    </source>
</evidence>
<evidence type="ECO:0000312" key="8">
    <source>
        <dbReference type="EMBL" id="EEE58994.1"/>
    </source>
</evidence>